<organism>
    <name type="scientific">Desulfitobacterium hafniense (strain DSM 10664 / DCB-2)</name>
    <dbReference type="NCBI Taxonomy" id="272564"/>
    <lineage>
        <taxon>Bacteria</taxon>
        <taxon>Bacillati</taxon>
        <taxon>Bacillota</taxon>
        <taxon>Clostridia</taxon>
        <taxon>Eubacteriales</taxon>
        <taxon>Desulfitobacteriaceae</taxon>
        <taxon>Desulfitobacterium</taxon>
    </lineage>
</organism>
<protein>
    <recommendedName>
        <fullName evidence="1">Small ribosomal subunit protein uS19</fullName>
    </recommendedName>
    <alternativeName>
        <fullName evidence="2">30S ribosomal protein S19</fullName>
    </alternativeName>
</protein>
<sequence>MSRSLKKGPYVEGRLLERVEKMNAANEKRVLKTWSRSSTIFPQMVGHTIAVHEGRKHIPIYITEDMVGHKLGEFAPTRTYKGHAGSEKSSGLR</sequence>
<comment type="function">
    <text evidence="1">Protein S19 forms a complex with S13 that binds strongly to the 16S ribosomal RNA.</text>
</comment>
<comment type="similarity">
    <text evidence="1">Belongs to the universal ribosomal protein uS19 family.</text>
</comment>
<accession>B8G1X0</accession>
<keyword id="KW-0687">Ribonucleoprotein</keyword>
<keyword id="KW-0689">Ribosomal protein</keyword>
<keyword id="KW-0694">RNA-binding</keyword>
<keyword id="KW-0699">rRNA-binding</keyword>
<evidence type="ECO:0000255" key="1">
    <source>
        <dbReference type="HAMAP-Rule" id="MF_00531"/>
    </source>
</evidence>
<evidence type="ECO:0000305" key="2"/>
<feature type="chain" id="PRO_1000146387" description="Small ribosomal subunit protein uS19">
    <location>
        <begin position="1"/>
        <end position="93"/>
    </location>
</feature>
<name>RS19_DESHD</name>
<dbReference type="EMBL" id="CP001336">
    <property type="protein sequence ID" value="ACL18493.1"/>
    <property type="molecule type" value="Genomic_DNA"/>
</dbReference>
<dbReference type="RefSeq" id="WP_015942757.1">
    <property type="nucleotide sequence ID" value="NC_011830.1"/>
</dbReference>
<dbReference type="SMR" id="B8G1X0"/>
<dbReference type="KEGG" id="dhd:Dhaf_0426"/>
<dbReference type="HOGENOM" id="CLU_144911_0_1_9"/>
<dbReference type="Proteomes" id="UP000007726">
    <property type="component" value="Chromosome"/>
</dbReference>
<dbReference type="GO" id="GO:0005737">
    <property type="term" value="C:cytoplasm"/>
    <property type="evidence" value="ECO:0007669"/>
    <property type="project" value="UniProtKB-ARBA"/>
</dbReference>
<dbReference type="GO" id="GO:0015935">
    <property type="term" value="C:small ribosomal subunit"/>
    <property type="evidence" value="ECO:0007669"/>
    <property type="project" value="InterPro"/>
</dbReference>
<dbReference type="GO" id="GO:0019843">
    <property type="term" value="F:rRNA binding"/>
    <property type="evidence" value="ECO:0007669"/>
    <property type="project" value="UniProtKB-UniRule"/>
</dbReference>
<dbReference type="GO" id="GO:0003735">
    <property type="term" value="F:structural constituent of ribosome"/>
    <property type="evidence" value="ECO:0007669"/>
    <property type="project" value="InterPro"/>
</dbReference>
<dbReference type="GO" id="GO:0000028">
    <property type="term" value="P:ribosomal small subunit assembly"/>
    <property type="evidence" value="ECO:0007669"/>
    <property type="project" value="TreeGrafter"/>
</dbReference>
<dbReference type="GO" id="GO:0006412">
    <property type="term" value="P:translation"/>
    <property type="evidence" value="ECO:0007669"/>
    <property type="project" value="UniProtKB-UniRule"/>
</dbReference>
<dbReference type="FunFam" id="3.30.860.10:FF:000001">
    <property type="entry name" value="30S ribosomal protein S19"/>
    <property type="match status" value="1"/>
</dbReference>
<dbReference type="Gene3D" id="3.30.860.10">
    <property type="entry name" value="30s Ribosomal Protein S19, Chain A"/>
    <property type="match status" value="1"/>
</dbReference>
<dbReference type="HAMAP" id="MF_00531">
    <property type="entry name" value="Ribosomal_uS19"/>
    <property type="match status" value="1"/>
</dbReference>
<dbReference type="InterPro" id="IPR002222">
    <property type="entry name" value="Ribosomal_uS19"/>
</dbReference>
<dbReference type="InterPro" id="IPR005732">
    <property type="entry name" value="Ribosomal_uS19_bac-type"/>
</dbReference>
<dbReference type="InterPro" id="IPR023575">
    <property type="entry name" value="Ribosomal_uS19_SF"/>
</dbReference>
<dbReference type="NCBIfam" id="TIGR01050">
    <property type="entry name" value="rpsS_bact"/>
    <property type="match status" value="1"/>
</dbReference>
<dbReference type="PANTHER" id="PTHR11880">
    <property type="entry name" value="RIBOSOMAL PROTEIN S19P FAMILY MEMBER"/>
    <property type="match status" value="1"/>
</dbReference>
<dbReference type="PANTHER" id="PTHR11880:SF8">
    <property type="entry name" value="SMALL RIBOSOMAL SUBUNIT PROTEIN US19M"/>
    <property type="match status" value="1"/>
</dbReference>
<dbReference type="Pfam" id="PF00203">
    <property type="entry name" value="Ribosomal_S19"/>
    <property type="match status" value="1"/>
</dbReference>
<dbReference type="PIRSF" id="PIRSF002144">
    <property type="entry name" value="Ribosomal_S19"/>
    <property type="match status" value="1"/>
</dbReference>
<dbReference type="PRINTS" id="PR00975">
    <property type="entry name" value="RIBOSOMALS19"/>
</dbReference>
<dbReference type="SUPFAM" id="SSF54570">
    <property type="entry name" value="Ribosomal protein S19"/>
    <property type="match status" value="1"/>
</dbReference>
<gene>
    <name evidence="1" type="primary">rpsS</name>
    <name type="ordered locus">Dhaf_0426</name>
</gene>
<reference key="1">
    <citation type="journal article" date="2012" name="BMC Microbiol.">
        <title>Genome sequence of Desulfitobacterium hafniense DCB-2, a Gram-positive anaerobe capable of dehalogenation and metal reduction.</title>
        <authorList>
            <person name="Kim S.H."/>
            <person name="Harzman C."/>
            <person name="Davis J.K."/>
            <person name="Hutcheson R."/>
            <person name="Broderick J.B."/>
            <person name="Marsh T.L."/>
            <person name="Tiedje J.M."/>
        </authorList>
    </citation>
    <scope>NUCLEOTIDE SEQUENCE [LARGE SCALE GENOMIC DNA]</scope>
    <source>
        <strain>DSM 10664 / DCB-2</strain>
    </source>
</reference>
<proteinExistence type="inferred from homology"/>